<reference key="1">
    <citation type="journal article" date="2008" name="J. Bacteriol.">
        <title>The complete genome sequence of Escherichia coli DH10B: insights into the biology of a laboratory workhorse.</title>
        <authorList>
            <person name="Durfee T."/>
            <person name="Nelson R."/>
            <person name="Baldwin S."/>
            <person name="Plunkett G. III"/>
            <person name="Burland V."/>
            <person name="Mau B."/>
            <person name="Petrosino J.F."/>
            <person name="Qin X."/>
            <person name="Muzny D.M."/>
            <person name="Ayele M."/>
            <person name="Gibbs R.A."/>
            <person name="Csorgo B."/>
            <person name="Posfai G."/>
            <person name="Weinstock G.M."/>
            <person name="Blattner F.R."/>
        </authorList>
    </citation>
    <scope>NUCLEOTIDE SEQUENCE [LARGE SCALE GENOMIC DNA]</scope>
    <source>
        <strain>K12 / DH10B</strain>
    </source>
</reference>
<organism>
    <name type="scientific">Escherichia coli (strain K12 / DH10B)</name>
    <dbReference type="NCBI Taxonomy" id="316385"/>
    <lineage>
        <taxon>Bacteria</taxon>
        <taxon>Pseudomonadati</taxon>
        <taxon>Pseudomonadota</taxon>
        <taxon>Gammaproteobacteria</taxon>
        <taxon>Enterobacterales</taxon>
        <taxon>Enterobacteriaceae</taxon>
        <taxon>Escherichia</taxon>
    </lineage>
</organism>
<name>YFEO_ECODH</name>
<comment type="subcellular location">
    <subcellularLocation>
        <location evidence="1">Cell membrane</location>
        <topology evidence="1">Multi-pass membrane protein</topology>
    </subcellularLocation>
</comment>
<comment type="similarity">
    <text evidence="1">Belongs to the chloride channel (TC 2.A.49) family.</text>
</comment>
<proteinExistence type="inferred from homology"/>
<dbReference type="EMBL" id="CP000948">
    <property type="protein sequence ID" value="ACB03546.1"/>
    <property type="molecule type" value="Genomic_DNA"/>
</dbReference>
<dbReference type="RefSeq" id="WP_000903148.1">
    <property type="nucleotide sequence ID" value="NC_010473.1"/>
</dbReference>
<dbReference type="SMR" id="B1X9R1"/>
<dbReference type="KEGG" id="ecd:ECDH10B_2554"/>
<dbReference type="HOGENOM" id="CLU_053130_0_0_6"/>
<dbReference type="GO" id="GO:0005886">
    <property type="term" value="C:plasma membrane"/>
    <property type="evidence" value="ECO:0007669"/>
    <property type="project" value="UniProtKB-SubCell"/>
</dbReference>
<dbReference type="GO" id="GO:0015108">
    <property type="term" value="F:chloride transmembrane transporter activity"/>
    <property type="evidence" value="ECO:0007669"/>
    <property type="project" value="InterPro"/>
</dbReference>
<dbReference type="GO" id="GO:0005216">
    <property type="term" value="F:monoatomic ion channel activity"/>
    <property type="evidence" value="ECO:0007669"/>
    <property type="project" value="UniProtKB-UniRule"/>
</dbReference>
<dbReference type="CDD" id="cd00400">
    <property type="entry name" value="Voltage_gated_ClC"/>
    <property type="match status" value="1"/>
</dbReference>
<dbReference type="FunFam" id="1.10.3080.10:FF:000007">
    <property type="entry name" value="Putative ion-transport protein YfeO"/>
    <property type="match status" value="1"/>
</dbReference>
<dbReference type="Gene3D" id="1.10.3080.10">
    <property type="entry name" value="Clc chloride channel"/>
    <property type="match status" value="1"/>
</dbReference>
<dbReference type="HAMAP" id="MF_01115">
    <property type="entry name" value="CLC_YfeO"/>
    <property type="match status" value="1"/>
</dbReference>
<dbReference type="InterPro" id="IPR022969">
    <property type="entry name" value="Chloride_channel_YfeO"/>
</dbReference>
<dbReference type="InterPro" id="IPR014743">
    <property type="entry name" value="Cl-channel_core"/>
</dbReference>
<dbReference type="InterPro" id="IPR001807">
    <property type="entry name" value="ClC"/>
</dbReference>
<dbReference type="InterPro" id="IPR050368">
    <property type="entry name" value="ClC-type_chloride_channel"/>
</dbReference>
<dbReference type="NCBIfam" id="NF002971">
    <property type="entry name" value="PRK03655.1"/>
    <property type="match status" value="1"/>
</dbReference>
<dbReference type="PANTHER" id="PTHR43427">
    <property type="entry name" value="CHLORIDE CHANNEL PROTEIN CLC-E"/>
    <property type="match status" value="1"/>
</dbReference>
<dbReference type="PANTHER" id="PTHR43427:SF9">
    <property type="entry name" value="ION-TRANSPORT PROTEIN YFEO-RELATED"/>
    <property type="match status" value="1"/>
</dbReference>
<dbReference type="Pfam" id="PF00654">
    <property type="entry name" value="Voltage_CLC"/>
    <property type="match status" value="1"/>
</dbReference>
<dbReference type="PRINTS" id="PR00762">
    <property type="entry name" value="CLCHANNEL"/>
</dbReference>
<dbReference type="SUPFAM" id="SSF81340">
    <property type="entry name" value="Clc chloride channel"/>
    <property type="match status" value="1"/>
</dbReference>
<accession>B1X9R1</accession>
<evidence type="ECO:0000255" key="1">
    <source>
        <dbReference type="HAMAP-Rule" id="MF_01115"/>
    </source>
</evidence>
<gene>
    <name evidence="1" type="primary">yfeO</name>
    <name type="ordered locus">ECDH10B_2554</name>
</gene>
<keyword id="KW-1003">Cell membrane</keyword>
<keyword id="KW-0407">Ion channel</keyword>
<keyword id="KW-0406">Ion transport</keyword>
<keyword id="KW-0472">Membrane</keyword>
<keyword id="KW-0812">Transmembrane</keyword>
<keyword id="KW-1133">Transmembrane helix</keyword>
<keyword id="KW-0813">Transport</keyword>
<sequence length="418" mass="43574">MLHPRARTMLLLSLPAVAIGIASSLILIVVMKIASVLQNLLWQRLPGTLGIAQDSPLWIIGVLTLTGIAVGLVIRFSQGHAGPDPACEPLIGAPVPPSALPGLIVALILGLAGGVSLGPEHPIMTVNIALAVAIGARLLPRVNRMEWTILASAGTIGALFGTPVAAALIFSQTLNGSSEVPLWDRLFAPLMAAAAGALTTGLFFHPHFSLPIAHYGQMEMTDILSGAIVAAIAIAAGMVAVWCLPRLHAMMHQMKNPVLVLGIGGFILGILGVIGGPVSLFKGLDEMQQMVANQAFSTSDYFLLAVIKLAALVVAAASGFRGGRIFPAVFVGVALGLMLHEHVPAVPAAITVSCAILGIVLVVTRDGWLSLFMAAVVVPNTTLLPLLCIVMLPAWLLLAGKPMMMVNRPKQQPPHDNV</sequence>
<feature type="chain" id="PRO_1000137211" description="Putative ion-transport protein YfeO">
    <location>
        <begin position="1"/>
        <end position="418"/>
    </location>
</feature>
<feature type="transmembrane region" description="Helical" evidence="1">
    <location>
        <begin position="10"/>
        <end position="30"/>
    </location>
</feature>
<feature type="transmembrane region" description="Helical" evidence="1">
    <location>
        <begin position="54"/>
        <end position="74"/>
    </location>
</feature>
<feature type="transmembrane region" description="Helical" evidence="1">
    <location>
        <begin position="99"/>
        <end position="119"/>
    </location>
</feature>
<feature type="transmembrane region" description="Helical" evidence="1">
    <location>
        <begin position="120"/>
        <end position="140"/>
    </location>
</feature>
<feature type="transmembrane region" description="Helical" evidence="1">
    <location>
        <begin position="149"/>
        <end position="169"/>
    </location>
</feature>
<feature type="transmembrane region" description="Helical" evidence="1">
    <location>
        <begin position="186"/>
        <end position="206"/>
    </location>
</feature>
<feature type="transmembrane region" description="Helical" evidence="1">
    <location>
        <begin position="223"/>
        <end position="243"/>
    </location>
</feature>
<feature type="transmembrane region" description="Helical" evidence="1">
    <location>
        <begin position="258"/>
        <end position="278"/>
    </location>
</feature>
<feature type="transmembrane region" description="Helical" evidence="1">
    <location>
        <begin position="300"/>
        <end position="320"/>
    </location>
</feature>
<feature type="transmembrane region" description="Helical" evidence="1">
    <location>
        <begin position="322"/>
        <end position="342"/>
    </location>
</feature>
<feature type="transmembrane region" description="Helical" evidence="1">
    <location>
        <begin position="343"/>
        <end position="363"/>
    </location>
</feature>
<feature type="transmembrane region" description="Helical" evidence="1">
    <location>
        <begin position="371"/>
        <end position="391"/>
    </location>
</feature>
<protein>
    <recommendedName>
        <fullName evidence="1">Putative ion-transport protein YfeO</fullName>
    </recommendedName>
</protein>